<dbReference type="EMBL" id="AP000604">
    <property type="status" value="NOT_ANNOTATED_CDS"/>
    <property type="molecule type" value="Genomic_DNA"/>
</dbReference>
<dbReference type="EMBL" id="CP002686">
    <property type="protein sequence ID" value="AEE76451.1"/>
    <property type="molecule type" value="Genomic_DNA"/>
</dbReference>
<dbReference type="RefSeq" id="NP_001030736.1">
    <property type="nucleotide sequence ID" value="NM_001035659.2"/>
</dbReference>
<dbReference type="SMR" id="P82770"/>
<dbReference type="STRING" id="3702.P82770"/>
<dbReference type="PaxDb" id="3702-AT3G20993.1"/>
<dbReference type="ProteomicsDB" id="224013"/>
<dbReference type="EnsemblPlants" id="AT3G20993.1">
    <property type="protein sequence ID" value="AT3G20993.1"/>
    <property type="gene ID" value="AT3G20993"/>
</dbReference>
<dbReference type="GeneID" id="3768793"/>
<dbReference type="Gramene" id="AT3G20993.1">
    <property type="protein sequence ID" value="AT3G20993.1"/>
    <property type="gene ID" value="AT3G20993"/>
</dbReference>
<dbReference type="KEGG" id="ath:AT3G20993"/>
<dbReference type="Araport" id="AT3G20993"/>
<dbReference type="TAIR" id="AT3G20993">
    <property type="gene designation" value="LCR56"/>
</dbReference>
<dbReference type="HOGENOM" id="CLU_182511_2_0_1"/>
<dbReference type="InParanoid" id="P82770"/>
<dbReference type="OMA" id="MTFRATI"/>
<dbReference type="PhylomeDB" id="P82770"/>
<dbReference type="PRO" id="PR:P82770"/>
<dbReference type="Proteomes" id="UP000006548">
    <property type="component" value="Chromosome 3"/>
</dbReference>
<dbReference type="ExpressionAtlas" id="P82770">
    <property type="expression patterns" value="baseline"/>
</dbReference>
<dbReference type="GO" id="GO:0005576">
    <property type="term" value="C:extracellular region"/>
    <property type="evidence" value="ECO:0007669"/>
    <property type="project" value="UniProtKB-SubCell"/>
</dbReference>
<dbReference type="GO" id="GO:0050832">
    <property type="term" value="P:defense response to fungus"/>
    <property type="evidence" value="ECO:0007669"/>
    <property type="project" value="UniProtKB-KW"/>
</dbReference>
<dbReference type="GO" id="GO:0031640">
    <property type="term" value="P:killing of cells of another organism"/>
    <property type="evidence" value="ECO:0007669"/>
    <property type="project" value="UniProtKB-KW"/>
</dbReference>
<dbReference type="InterPro" id="IPR010851">
    <property type="entry name" value="DEFL"/>
</dbReference>
<dbReference type="PANTHER" id="PTHR33830:SF10">
    <property type="entry name" value="DEFENSIN-LIKE PROTEIN 122-RELATED"/>
    <property type="match status" value="1"/>
</dbReference>
<dbReference type="PANTHER" id="PTHR33830">
    <property type="entry name" value="DEFENSIN-LIKE PROTEIN 184-RELATED"/>
    <property type="match status" value="1"/>
</dbReference>
<dbReference type="Pfam" id="PF07333">
    <property type="entry name" value="SLR1-BP"/>
    <property type="match status" value="1"/>
</dbReference>
<accession>P82770</accession>
<organism evidence="3">
    <name type="scientific">Arabidopsis thaliana</name>
    <name type="common">Mouse-ear cress</name>
    <dbReference type="NCBI Taxonomy" id="3702"/>
    <lineage>
        <taxon>Eukaryota</taxon>
        <taxon>Viridiplantae</taxon>
        <taxon>Streptophyta</taxon>
        <taxon>Embryophyta</taxon>
        <taxon>Tracheophyta</taxon>
        <taxon>Spermatophyta</taxon>
        <taxon>Magnoliopsida</taxon>
        <taxon>eudicotyledons</taxon>
        <taxon>Gunneridae</taxon>
        <taxon>Pentapetalae</taxon>
        <taxon>rosids</taxon>
        <taxon>malvids</taxon>
        <taxon>Brassicales</taxon>
        <taxon>Brassicaceae</taxon>
        <taxon>Camelineae</taxon>
        <taxon>Arabidopsis</taxon>
    </lineage>
</organism>
<reference evidence="3" key="1">
    <citation type="journal article" date="2000" name="DNA Res.">
        <title>Structural analysis of Arabidopsis thaliana chromosome 3. II. Sequence features of the 4,251,695 bp regions covered by 90 P1, TAC and BAC clones.</title>
        <authorList>
            <person name="Kaneko T."/>
            <person name="Katoh T."/>
            <person name="Sato S."/>
            <person name="Nakamura Y."/>
            <person name="Asamizu E."/>
            <person name="Tabata S."/>
        </authorList>
    </citation>
    <scope>NUCLEOTIDE SEQUENCE [LARGE SCALE GENOMIC DNA]</scope>
    <source>
        <strain>cv. Columbia</strain>
    </source>
</reference>
<reference key="2">
    <citation type="journal article" date="2017" name="Plant J.">
        <title>Araport11: a complete reannotation of the Arabidopsis thaliana reference genome.</title>
        <authorList>
            <person name="Cheng C.Y."/>
            <person name="Krishnakumar V."/>
            <person name="Chan A.P."/>
            <person name="Thibaud-Nissen F."/>
            <person name="Schobel S."/>
            <person name="Town C.D."/>
        </authorList>
    </citation>
    <scope>GENOME REANNOTATION</scope>
    <source>
        <strain>cv. Columbia</strain>
    </source>
</reference>
<reference evidence="3" key="3">
    <citation type="journal article" date="2001" name="Plant Mol. Biol.">
        <title>Two large Arabidopsis thaliana gene families are homologous to the Brassica gene superfamily that encodes pollen coat proteins and the male component of the self-incompatibility response.</title>
        <authorList>
            <person name="Vanoosthuyse V."/>
            <person name="Miege C."/>
            <person name="Dumas C."/>
            <person name="Cock J.M."/>
        </authorList>
    </citation>
    <scope>IDENTIFICATION</scope>
</reference>
<reference key="4">
    <citation type="journal article" date="2005" name="Plant Physiol.">
        <title>Genome organization of more than 300 defensin-like genes in Arabidopsis.</title>
        <authorList>
            <person name="Silverstein K.A.T."/>
            <person name="Graham M.A."/>
            <person name="Paape T.D."/>
            <person name="VandenBosch K.A."/>
        </authorList>
    </citation>
    <scope>GENE FAMILY</scope>
</reference>
<comment type="subcellular location">
    <subcellularLocation>
        <location evidence="1">Secreted</location>
    </subcellularLocation>
</comment>
<comment type="similarity">
    <text evidence="3">Belongs to the DEFL family.</text>
</comment>
<keyword id="KW-0929">Antimicrobial</keyword>
<keyword id="KW-1015">Disulfide bond</keyword>
<keyword id="KW-0295">Fungicide</keyword>
<keyword id="KW-0611">Plant defense</keyword>
<keyword id="KW-1185">Reference proteome</keyword>
<keyword id="KW-0964">Secreted</keyword>
<keyword id="KW-0732">Signal</keyword>
<proteinExistence type="inferred from homology"/>
<name>DF120_ARATH</name>
<gene>
    <name type="primary">LCR56</name>
    <name type="ordered locus">At3g20993</name>
    <name type="ORF">MSA6</name>
</gene>
<sequence length="77" mass="8416">MTQKATILAIFMVVLVLGLETKETQGQEMCHDLIKKTDCDDATCVTLCKQKWNGNGGGSCFQIVNLKSCLCAFPCQV</sequence>
<evidence type="ECO:0000250" key="1"/>
<evidence type="ECO:0000255" key="2"/>
<evidence type="ECO:0000305" key="3"/>
<feature type="signal peptide" evidence="2">
    <location>
        <begin position="1"/>
        <end position="26"/>
    </location>
</feature>
<feature type="chain" id="PRO_0000017294" description="Putative defensin-like protein 120">
    <location>
        <begin position="27"/>
        <end position="77"/>
    </location>
</feature>
<feature type="disulfide bond" evidence="1">
    <location>
        <begin position="30"/>
        <end position="75"/>
    </location>
</feature>
<feature type="disulfide bond" evidence="1">
    <location>
        <begin position="39"/>
        <end position="60"/>
    </location>
</feature>
<feature type="disulfide bond" evidence="1">
    <location>
        <begin position="44"/>
        <end position="69"/>
    </location>
</feature>
<feature type="disulfide bond" evidence="1">
    <location>
        <begin position="48"/>
        <end position="71"/>
    </location>
</feature>
<protein>
    <recommendedName>
        <fullName>Putative defensin-like protein 120</fullName>
    </recommendedName>
    <alternativeName>
        <fullName>Putative low-molecular-weight cysteine-rich protein 56</fullName>
        <shortName>Protein LCR56</shortName>
    </alternativeName>
</protein>